<sequence>MASRTLSGALALAAAATAVLAAPATVAHRSPPGTKDVTAVLFEWDYVSVAKECTSTLGPAGYGYVQVSPPAEHIQGSQWWTSYQPVSYKIAGRLGDRAAFRSMVNTCHAAGVKVVVDTVINHMSAGSGTGTGGSSYTKYDYPGLYSAPDFDDCTAEITDYQDRWNVQHCELVGLADLDTGEEYVRQTIAGYMNDLLSLGVDGFRIDAATHIPAEDLANIKSRLSNPNAYWKQEVIYGAGEPPKPGEYTGTGDVQEFRYAYDLKRVFTQEHLAYLKNYGEDWGYLSSTTAGVFVDNHDTERNGSTLNYKNDATYTLANVFMLAWPYGAPDINSGYEWSDPDARPPDGGHVDACWQNGWKCQHKWPEIASMVAFRNATRGEPVTDWWDDGADAIAFGRGSKGFVAINHESATVQRTYQTSLPAGTYCDVQSNTTVTVDSAGRFTAALGPDTALALHNGRTSC</sequence>
<comment type="catalytic activity">
    <reaction>
        <text>Endohydrolysis of (1-&gt;4)-alpha-D-glucosidic linkages in polysaccharides containing three or more (1-&gt;4)-alpha-linked D-glucose units.</text>
        <dbReference type="EC" id="3.2.1.1"/>
    </reaction>
</comment>
<comment type="cofactor">
    <cofactor evidence="1">
        <name>Ca(2+)</name>
        <dbReference type="ChEBI" id="CHEBI:29108"/>
    </cofactor>
    <text evidence="1">Binds 1 Ca(2+) ion per subunit.</text>
</comment>
<comment type="subunit">
    <text evidence="1">Monomer.</text>
</comment>
<comment type="similarity">
    <text evidence="3">Belongs to the glycosyl hydrolase 13 family.</text>
</comment>
<name>AMY_STRTL</name>
<evidence type="ECO:0000250" key="1"/>
<evidence type="ECO:0000255" key="2"/>
<evidence type="ECO:0000305" key="3"/>
<dbReference type="EC" id="3.2.1.1"/>
<dbReference type="EMBL" id="M34957">
    <property type="protein sequence ID" value="AAA26697.1"/>
    <property type="molecule type" value="Genomic_DNA"/>
</dbReference>
<dbReference type="PIR" id="JN0663">
    <property type="entry name" value="JN0663"/>
</dbReference>
<dbReference type="SMR" id="P27350"/>
<dbReference type="CAZy" id="GH13">
    <property type="family name" value="Glycoside Hydrolase Family 13"/>
</dbReference>
<dbReference type="GO" id="GO:0004556">
    <property type="term" value="F:alpha-amylase activity"/>
    <property type="evidence" value="ECO:0007669"/>
    <property type="project" value="UniProtKB-EC"/>
</dbReference>
<dbReference type="GO" id="GO:0046872">
    <property type="term" value="F:metal ion binding"/>
    <property type="evidence" value="ECO:0007669"/>
    <property type="project" value="UniProtKB-KW"/>
</dbReference>
<dbReference type="GO" id="GO:0005975">
    <property type="term" value="P:carbohydrate metabolic process"/>
    <property type="evidence" value="ECO:0007669"/>
    <property type="project" value="InterPro"/>
</dbReference>
<dbReference type="CDD" id="cd11317">
    <property type="entry name" value="AmyAc_bac_euk_AmyA"/>
    <property type="match status" value="1"/>
</dbReference>
<dbReference type="Gene3D" id="3.20.20.80">
    <property type="entry name" value="Glycosidases"/>
    <property type="match status" value="1"/>
</dbReference>
<dbReference type="Gene3D" id="2.60.40.1180">
    <property type="entry name" value="Golgi alpha-mannosidase II"/>
    <property type="match status" value="1"/>
</dbReference>
<dbReference type="InterPro" id="IPR006048">
    <property type="entry name" value="A-amylase/branching_C"/>
</dbReference>
<dbReference type="InterPro" id="IPR031319">
    <property type="entry name" value="A-amylase_C"/>
</dbReference>
<dbReference type="InterPro" id="IPR006046">
    <property type="entry name" value="Alpha_amylase"/>
</dbReference>
<dbReference type="InterPro" id="IPR006047">
    <property type="entry name" value="Glyco_hydro_13_cat_dom"/>
</dbReference>
<dbReference type="InterPro" id="IPR013780">
    <property type="entry name" value="Glyco_hydro_b"/>
</dbReference>
<dbReference type="InterPro" id="IPR017853">
    <property type="entry name" value="Glycoside_hydrolase_SF"/>
</dbReference>
<dbReference type="PANTHER" id="PTHR43447">
    <property type="entry name" value="ALPHA-AMYLASE"/>
    <property type="match status" value="1"/>
</dbReference>
<dbReference type="Pfam" id="PF00128">
    <property type="entry name" value="Alpha-amylase"/>
    <property type="match status" value="1"/>
</dbReference>
<dbReference type="Pfam" id="PF02806">
    <property type="entry name" value="Alpha-amylase_C"/>
    <property type="match status" value="1"/>
</dbReference>
<dbReference type="PRINTS" id="PR00110">
    <property type="entry name" value="ALPHAAMYLASE"/>
</dbReference>
<dbReference type="SMART" id="SM00642">
    <property type="entry name" value="Aamy"/>
    <property type="match status" value="1"/>
</dbReference>
<dbReference type="SMART" id="SM00632">
    <property type="entry name" value="Aamy_C"/>
    <property type="match status" value="1"/>
</dbReference>
<dbReference type="SUPFAM" id="SSF51445">
    <property type="entry name" value="(Trans)glycosidases"/>
    <property type="match status" value="1"/>
</dbReference>
<dbReference type="SUPFAM" id="SSF51011">
    <property type="entry name" value="Glycosyl hydrolase domain"/>
    <property type="match status" value="1"/>
</dbReference>
<keyword id="KW-0106">Calcium</keyword>
<keyword id="KW-0119">Carbohydrate metabolism</keyword>
<keyword id="KW-0326">Glycosidase</keyword>
<keyword id="KW-0378">Hydrolase</keyword>
<keyword id="KW-0479">Metal-binding</keyword>
<keyword id="KW-0732">Signal</keyword>
<feature type="signal peptide" evidence="2">
    <location>
        <begin position="1"/>
        <end position="21"/>
    </location>
</feature>
<feature type="chain" id="PRO_0000001343" description="Alpha-amylase">
    <location>
        <begin position="22"/>
        <end position="460"/>
    </location>
</feature>
<feature type="active site" description="Nucleophile" evidence="1">
    <location>
        <position position="206"/>
    </location>
</feature>
<feature type="active site" description="Proton donor" evidence="1">
    <location>
        <position position="233"/>
    </location>
</feature>
<feature type="binding site" evidence="1">
    <location>
        <position position="121"/>
    </location>
    <ligand>
        <name>Ca(2+)</name>
        <dbReference type="ChEBI" id="CHEBI:29108"/>
    </ligand>
</feature>
<feature type="binding site" evidence="1">
    <location>
        <position position="167"/>
    </location>
    <ligand>
        <name>Ca(2+)</name>
        <dbReference type="ChEBI" id="CHEBI:29108"/>
    </ligand>
</feature>
<feature type="binding site" evidence="1">
    <location>
        <position position="176"/>
    </location>
    <ligand>
        <name>Ca(2+)</name>
        <dbReference type="ChEBI" id="CHEBI:29108"/>
    </ligand>
</feature>
<feature type="binding site" evidence="1">
    <location>
        <position position="210"/>
    </location>
    <ligand>
        <name>Ca(2+)</name>
        <dbReference type="ChEBI" id="CHEBI:29108"/>
    </ligand>
</feature>
<feature type="site" description="Transition state stabilizer" evidence="1">
    <location>
        <position position="297"/>
    </location>
</feature>
<organism>
    <name type="scientific">Streptomyces thermoviolaceus</name>
    <dbReference type="NCBI Taxonomy" id="1952"/>
    <lineage>
        <taxon>Bacteria</taxon>
        <taxon>Bacillati</taxon>
        <taxon>Actinomycetota</taxon>
        <taxon>Actinomycetes</taxon>
        <taxon>Kitasatosporales</taxon>
        <taxon>Streptomycetaceae</taxon>
        <taxon>Streptomyces</taxon>
    </lineage>
</organism>
<gene>
    <name type="primary">amy</name>
</gene>
<reference key="1">
    <citation type="journal article" date="1993" name="Gene">
        <title>Sequence of the Streptomyces thermoviolaceus CUB74 alpha-amylase-encoding gene and its transcription analysis in Streptomyces lividans.</title>
        <authorList>
            <person name="Bahri S.M."/>
            <person name="Ward J.M."/>
        </authorList>
    </citation>
    <scope>NUCLEOTIDE SEQUENCE [GENOMIC DNA]</scope>
    <source>
        <strain>CUB74</strain>
    </source>
</reference>
<accession>P27350</accession>
<protein>
    <recommendedName>
        <fullName>Alpha-amylase</fullName>
        <ecNumber>3.2.1.1</ecNumber>
    </recommendedName>
    <alternativeName>
        <fullName>1,4-alpha-D-glucan glucanohydrolase</fullName>
    </alternativeName>
</protein>
<proteinExistence type="inferred from homology"/>